<proteinExistence type="inferred from homology"/>
<sequence length="253" mass="26970">MRILLSNDDGYLAPGLAALYEALRPLAEILVMAPEQNCSGASNSLTLSRPLSVSRSAATGFYYVNGTPTDSVHVALTGMLDTKPDLVVSGINNGQNMGDDTLYSGTVAAATEGIMFGVPAIAFSLVHKEWAHLGDAARVAAEIVRHYLDHPLPGQPLLNVNIPNLPYEELKGWRVTRLGKRHPSQPVIRQTNPRGEPIYWIGAAGDALDASEGTDFHATASGYVSITPLQLDLTHTQMLAATRDWARAGSGAS</sequence>
<name>SURE_BURP6</name>
<dbReference type="EC" id="3.1.3.5" evidence="1"/>
<dbReference type="EMBL" id="CP000570">
    <property type="protein sequence ID" value="ABN85076.1"/>
    <property type="molecule type" value="Genomic_DNA"/>
</dbReference>
<dbReference type="RefSeq" id="WP_004521326.1">
    <property type="nucleotide sequence ID" value="NC_009074.1"/>
</dbReference>
<dbReference type="SMR" id="A3NA65"/>
<dbReference type="GeneID" id="93060487"/>
<dbReference type="KEGG" id="bpd:BURPS668_2201"/>
<dbReference type="HOGENOM" id="CLU_045192_1_2_4"/>
<dbReference type="GO" id="GO:0005737">
    <property type="term" value="C:cytoplasm"/>
    <property type="evidence" value="ECO:0007669"/>
    <property type="project" value="UniProtKB-SubCell"/>
</dbReference>
<dbReference type="GO" id="GO:0008254">
    <property type="term" value="F:3'-nucleotidase activity"/>
    <property type="evidence" value="ECO:0007669"/>
    <property type="project" value="TreeGrafter"/>
</dbReference>
<dbReference type="GO" id="GO:0008253">
    <property type="term" value="F:5'-nucleotidase activity"/>
    <property type="evidence" value="ECO:0007669"/>
    <property type="project" value="UniProtKB-UniRule"/>
</dbReference>
<dbReference type="GO" id="GO:0004309">
    <property type="term" value="F:exopolyphosphatase activity"/>
    <property type="evidence" value="ECO:0007669"/>
    <property type="project" value="TreeGrafter"/>
</dbReference>
<dbReference type="GO" id="GO:0046872">
    <property type="term" value="F:metal ion binding"/>
    <property type="evidence" value="ECO:0007669"/>
    <property type="project" value="UniProtKB-UniRule"/>
</dbReference>
<dbReference type="GO" id="GO:0000166">
    <property type="term" value="F:nucleotide binding"/>
    <property type="evidence" value="ECO:0007669"/>
    <property type="project" value="UniProtKB-KW"/>
</dbReference>
<dbReference type="FunFam" id="3.40.1210.10:FF:000001">
    <property type="entry name" value="5'/3'-nucleotidase SurE"/>
    <property type="match status" value="1"/>
</dbReference>
<dbReference type="Gene3D" id="3.40.1210.10">
    <property type="entry name" value="Survival protein SurE-like phosphatase/nucleotidase"/>
    <property type="match status" value="1"/>
</dbReference>
<dbReference type="HAMAP" id="MF_00060">
    <property type="entry name" value="SurE"/>
    <property type="match status" value="1"/>
</dbReference>
<dbReference type="InterPro" id="IPR030048">
    <property type="entry name" value="SurE"/>
</dbReference>
<dbReference type="InterPro" id="IPR002828">
    <property type="entry name" value="SurE-like_Pase/nucleotidase"/>
</dbReference>
<dbReference type="InterPro" id="IPR036523">
    <property type="entry name" value="SurE-like_sf"/>
</dbReference>
<dbReference type="NCBIfam" id="NF001489">
    <property type="entry name" value="PRK00346.1-3"/>
    <property type="match status" value="1"/>
</dbReference>
<dbReference type="NCBIfam" id="NF001490">
    <property type="entry name" value="PRK00346.1-4"/>
    <property type="match status" value="1"/>
</dbReference>
<dbReference type="NCBIfam" id="TIGR00087">
    <property type="entry name" value="surE"/>
    <property type="match status" value="1"/>
</dbReference>
<dbReference type="PANTHER" id="PTHR30457">
    <property type="entry name" value="5'-NUCLEOTIDASE SURE"/>
    <property type="match status" value="1"/>
</dbReference>
<dbReference type="PANTHER" id="PTHR30457:SF12">
    <property type="entry name" value="5'_3'-NUCLEOTIDASE SURE"/>
    <property type="match status" value="1"/>
</dbReference>
<dbReference type="Pfam" id="PF01975">
    <property type="entry name" value="SurE"/>
    <property type="match status" value="1"/>
</dbReference>
<dbReference type="SUPFAM" id="SSF64167">
    <property type="entry name" value="SurE-like"/>
    <property type="match status" value="1"/>
</dbReference>
<organism>
    <name type="scientific">Burkholderia pseudomallei (strain 668)</name>
    <dbReference type="NCBI Taxonomy" id="320373"/>
    <lineage>
        <taxon>Bacteria</taxon>
        <taxon>Pseudomonadati</taxon>
        <taxon>Pseudomonadota</taxon>
        <taxon>Betaproteobacteria</taxon>
        <taxon>Burkholderiales</taxon>
        <taxon>Burkholderiaceae</taxon>
        <taxon>Burkholderia</taxon>
        <taxon>pseudomallei group</taxon>
    </lineage>
</organism>
<feature type="chain" id="PRO_1000007710" description="5'-nucleotidase SurE">
    <location>
        <begin position="1"/>
        <end position="253"/>
    </location>
</feature>
<feature type="binding site" evidence="1">
    <location>
        <position position="8"/>
    </location>
    <ligand>
        <name>a divalent metal cation</name>
        <dbReference type="ChEBI" id="CHEBI:60240"/>
    </ligand>
</feature>
<feature type="binding site" evidence="1">
    <location>
        <position position="9"/>
    </location>
    <ligand>
        <name>a divalent metal cation</name>
        <dbReference type="ChEBI" id="CHEBI:60240"/>
    </ligand>
</feature>
<feature type="binding site" evidence="1">
    <location>
        <position position="39"/>
    </location>
    <ligand>
        <name>a divalent metal cation</name>
        <dbReference type="ChEBI" id="CHEBI:60240"/>
    </ligand>
</feature>
<feature type="binding site" evidence="1">
    <location>
        <position position="92"/>
    </location>
    <ligand>
        <name>a divalent metal cation</name>
        <dbReference type="ChEBI" id="CHEBI:60240"/>
    </ligand>
</feature>
<comment type="function">
    <text evidence="1">Nucleotidase that shows phosphatase activity on nucleoside 5'-monophosphates.</text>
</comment>
<comment type="catalytic activity">
    <reaction evidence="1">
        <text>a ribonucleoside 5'-phosphate + H2O = a ribonucleoside + phosphate</text>
        <dbReference type="Rhea" id="RHEA:12484"/>
        <dbReference type="ChEBI" id="CHEBI:15377"/>
        <dbReference type="ChEBI" id="CHEBI:18254"/>
        <dbReference type="ChEBI" id="CHEBI:43474"/>
        <dbReference type="ChEBI" id="CHEBI:58043"/>
        <dbReference type="EC" id="3.1.3.5"/>
    </reaction>
</comment>
<comment type="cofactor">
    <cofactor evidence="1">
        <name>a divalent metal cation</name>
        <dbReference type="ChEBI" id="CHEBI:60240"/>
    </cofactor>
    <text evidence="1">Binds 1 divalent metal cation per subunit.</text>
</comment>
<comment type="subcellular location">
    <subcellularLocation>
        <location evidence="1">Cytoplasm</location>
    </subcellularLocation>
</comment>
<comment type="similarity">
    <text evidence="1">Belongs to the SurE nucleotidase family.</text>
</comment>
<protein>
    <recommendedName>
        <fullName evidence="1">5'-nucleotidase SurE</fullName>
        <ecNumber evidence="1">3.1.3.5</ecNumber>
    </recommendedName>
    <alternativeName>
        <fullName evidence="1">Nucleoside 5'-monophosphate phosphohydrolase</fullName>
    </alternativeName>
</protein>
<reference key="1">
    <citation type="journal article" date="2010" name="Genome Biol. Evol.">
        <title>Continuing evolution of Burkholderia mallei through genome reduction and large-scale rearrangements.</title>
        <authorList>
            <person name="Losada L."/>
            <person name="Ronning C.M."/>
            <person name="DeShazer D."/>
            <person name="Woods D."/>
            <person name="Fedorova N."/>
            <person name="Kim H.S."/>
            <person name="Shabalina S.A."/>
            <person name="Pearson T.R."/>
            <person name="Brinkac L."/>
            <person name="Tan P."/>
            <person name="Nandi T."/>
            <person name="Crabtree J."/>
            <person name="Badger J."/>
            <person name="Beckstrom-Sternberg S."/>
            <person name="Saqib M."/>
            <person name="Schutzer S.E."/>
            <person name="Keim P."/>
            <person name="Nierman W.C."/>
        </authorList>
    </citation>
    <scope>NUCLEOTIDE SEQUENCE [LARGE SCALE GENOMIC DNA]</scope>
    <source>
        <strain>668</strain>
    </source>
</reference>
<keyword id="KW-0963">Cytoplasm</keyword>
<keyword id="KW-0378">Hydrolase</keyword>
<keyword id="KW-0479">Metal-binding</keyword>
<keyword id="KW-0547">Nucleotide-binding</keyword>
<gene>
    <name evidence="1" type="primary">surE</name>
    <name type="ordered locus">BURPS668_2201</name>
</gene>
<accession>A3NA65</accession>
<evidence type="ECO:0000255" key="1">
    <source>
        <dbReference type="HAMAP-Rule" id="MF_00060"/>
    </source>
</evidence>